<name>DNAJ_RUTMC</name>
<proteinExistence type="inferred from homology"/>
<comment type="function">
    <text evidence="1">Participates actively in the response to hyperosmotic and heat shock by preventing the aggregation of stress-denatured proteins and by disaggregating proteins, also in an autonomous, DnaK-independent fashion. Unfolded proteins bind initially to DnaJ; upon interaction with the DnaJ-bound protein, DnaK hydrolyzes its bound ATP, resulting in the formation of a stable complex. GrpE releases ADP from DnaK; ATP binding to DnaK triggers the release of the substrate protein, thus completing the reaction cycle. Several rounds of ATP-dependent interactions between DnaJ, DnaK and GrpE are required for fully efficient folding. Also involved, together with DnaK and GrpE, in the DNA replication of plasmids through activation of initiation proteins.</text>
</comment>
<comment type="cofactor">
    <cofactor evidence="1">
        <name>Zn(2+)</name>
        <dbReference type="ChEBI" id="CHEBI:29105"/>
    </cofactor>
    <text evidence="1">Binds 2 Zn(2+) ions per monomer.</text>
</comment>
<comment type="subunit">
    <text evidence="1">Homodimer.</text>
</comment>
<comment type="subcellular location">
    <subcellularLocation>
        <location evidence="1">Cytoplasm</location>
    </subcellularLocation>
</comment>
<comment type="domain">
    <text evidence="1">The J domain is necessary and sufficient to stimulate DnaK ATPase activity. Zinc center 1 plays an important role in the autonomous, DnaK-independent chaperone activity of DnaJ. Zinc center 2 is essential for interaction with DnaK and for DnaJ activity.</text>
</comment>
<comment type="similarity">
    <text evidence="1">Belongs to the DnaJ family.</text>
</comment>
<gene>
    <name evidence="1" type="primary">dnaJ</name>
    <name type="ordered locus">Rmag_0352</name>
</gene>
<dbReference type="EMBL" id="CP000488">
    <property type="protein sequence ID" value="ABL02128.1"/>
    <property type="molecule type" value="Genomic_DNA"/>
</dbReference>
<dbReference type="RefSeq" id="WP_011737753.1">
    <property type="nucleotide sequence ID" value="NC_008610.1"/>
</dbReference>
<dbReference type="SMR" id="A1AW21"/>
<dbReference type="STRING" id="413404.Rmag_0352"/>
<dbReference type="KEGG" id="rma:Rmag_0352"/>
<dbReference type="eggNOG" id="COG0484">
    <property type="taxonomic scope" value="Bacteria"/>
</dbReference>
<dbReference type="HOGENOM" id="CLU_017633_0_7_6"/>
<dbReference type="OrthoDB" id="9779889at2"/>
<dbReference type="Proteomes" id="UP000002587">
    <property type="component" value="Chromosome"/>
</dbReference>
<dbReference type="GO" id="GO:0005737">
    <property type="term" value="C:cytoplasm"/>
    <property type="evidence" value="ECO:0007669"/>
    <property type="project" value="UniProtKB-SubCell"/>
</dbReference>
<dbReference type="GO" id="GO:0005524">
    <property type="term" value="F:ATP binding"/>
    <property type="evidence" value="ECO:0007669"/>
    <property type="project" value="InterPro"/>
</dbReference>
<dbReference type="GO" id="GO:0031072">
    <property type="term" value="F:heat shock protein binding"/>
    <property type="evidence" value="ECO:0007669"/>
    <property type="project" value="InterPro"/>
</dbReference>
<dbReference type="GO" id="GO:0051082">
    <property type="term" value="F:unfolded protein binding"/>
    <property type="evidence" value="ECO:0007669"/>
    <property type="project" value="UniProtKB-UniRule"/>
</dbReference>
<dbReference type="GO" id="GO:0008270">
    <property type="term" value="F:zinc ion binding"/>
    <property type="evidence" value="ECO:0007669"/>
    <property type="project" value="UniProtKB-UniRule"/>
</dbReference>
<dbReference type="GO" id="GO:0051085">
    <property type="term" value="P:chaperone cofactor-dependent protein refolding"/>
    <property type="evidence" value="ECO:0007669"/>
    <property type="project" value="TreeGrafter"/>
</dbReference>
<dbReference type="GO" id="GO:0006260">
    <property type="term" value="P:DNA replication"/>
    <property type="evidence" value="ECO:0007669"/>
    <property type="project" value="UniProtKB-KW"/>
</dbReference>
<dbReference type="GO" id="GO:0042026">
    <property type="term" value="P:protein refolding"/>
    <property type="evidence" value="ECO:0007669"/>
    <property type="project" value="TreeGrafter"/>
</dbReference>
<dbReference type="GO" id="GO:0009408">
    <property type="term" value="P:response to heat"/>
    <property type="evidence" value="ECO:0007669"/>
    <property type="project" value="InterPro"/>
</dbReference>
<dbReference type="CDD" id="cd06257">
    <property type="entry name" value="DnaJ"/>
    <property type="match status" value="1"/>
</dbReference>
<dbReference type="CDD" id="cd10747">
    <property type="entry name" value="DnaJ_C"/>
    <property type="match status" value="1"/>
</dbReference>
<dbReference type="CDD" id="cd10719">
    <property type="entry name" value="DnaJ_zf"/>
    <property type="match status" value="1"/>
</dbReference>
<dbReference type="FunFam" id="2.10.230.10:FF:000002">
    <property type="entry name" value="Molecular chaperone DnaJ"/>
    <property type="match status" value="1"/>
</dbReference>
<dbReference type="FunFam" id="2.60.260.20:FF:000004">
    <property type="entry name" value="Molecular chaperone DnaJ"/>
    <property type="match status" value="1"/>
</dbReference>
<dbReference type="Gene3D" id="1.10.287.110">
    <property type="entry name" value="DnaJ domain"/>
    <property type="match status" value="1"/>
</dbReference>
<dbReference type="Gene3D" id="2.10.230.10">
    <property type="entry name" value="Heat shock protein DnaJ, cysteine-rich domain"/>
    <property type="match status" value="1"/>
</dbReference>
<dbReference type="Gene3D" id="2.60.260.20">
    <property type="entry name" value="Urease metallochaperone UreE, N-terminal domain"/>
    <property type="match status" value="2"/>
</dbReference>
<dbReference type="HAMAP" id="MF_01152">
    <property type="entry name" value="DnaJ"/>
    <property type="match status" value="1"/>
</dbReference>
<dbReference type="InterPro" id="IPR012724">
    <property type="entry name" value="DnaJ"/>
</dbReference>
<dbReference type="InterPro" id="IPR002939">
    <property type="entry name" value="DnaJ_C"/>
</dbReference>
<dbReference type="InterPro" id="IPR001623">
    <property type="entry name" value="DnaJ_domain"/>
</dbReference>
<dbReference type="InterPro" id="IPR018253">
    <property type="entry name" value="DnaJ_domain_CS"/>
</dbReference>
<dbReference type="InterPro" id="IPR008971">
    <property type="entry name" value="HSP40/DnaJ_pept-bd"/>
</dbReference>
<dbReference type="InterPro" id="IPR001305">
    <property type="entry name" value="HSP_DnaJ_Cys-rich_dom"/>
</dbReference>
<dbReference type="InterPro" id="IPR036410">
    <property type="entry name" value="HSP_DnaJ_Cys-rich_dom_sf"/>
</dbReference>
<dbReference type="InterPro" id="IPR036869">
    <property type="entry name" value="J_dom_sf"/>
</dbReference>
<dbReference type="NCBIfam" id="TIGR02349">
    <property type="entry name" value="DnaJ_bact"/>
    <property type="match status" value="1"/>
</dbReference>
<dbReference type="NCBIfam" id="NF008035">
    <property type="entry name" value="PRK10767.1"/>
    <property type="match status" value="1"/>
</dbReference>
<dbReference type="PANTHER" id="PTHR43096:SF48">
    <property type="entry name" value="CHAPERONE PROTEIN DNAJ"/>
    <property type="match status" value="1"/>
</dbReference>
<dbReference type="PANTHER" id="PTHR43096">
    <property type="entry name" value="DNAJ HOMOLOG 1, MITOCHONDRIAL-RELATED"/>
    <property type="match status" value="1"/>
</dbReference>
<dbReference type="Pfam" id="PF00226">
    <property type="entry name" value="DnaJ"/>
    <property type="match status" value="1"/>
</dbReference>
<dbReference type="Pfam" id="PF01556">
    <property type="entry name" value="DnaJ_C"/>
    <property type="match status" value="1"/>
</dbReference>
<dbReference type="Pfam" id="PF00684">
    <property type="entry name" value="DnaJ_CXXCXGXG"/>
    <property type="match status" value="1"/>
</dbReference>
<dbReference type="PRINTS" id="PR00625">
    <property type="entry name" value="JDOMAIN"/>
</dbReference>
<dbReference type="SMART" id="SM00271">
    <property type="entry name" value="DnaJ"/>
    <property type="match status" value="1"/>
</dbReference>
<dbReference type="SUPFAM" id="SSF46565">
    <property type="entry name" value="Chaperone J-domain"/>
    <property type="match status" value="1"/>
</dbReference>
<dbReference type="SUPFAM" id="SSF57938">
    <property type="entry name" value="DnaJ/Hsp40 cysteine-rich domain"/>
    <property type="match status" value="1"/>
</dbReference>
<dbReference type="SUPFAM" id="SSF49493">
    <property type="entry name" value="HSP40/DnaJ peptide-binding domain"/>
    <property type="match status" value="2"/>
</dbReference>
<dbReference type="PROSITE" id="PS00636">
    <property type="entry name" value="DNAJ_1"/>
    <property type="match status" value="1"/>
</dbReference>
<dbReference type="PROSITE" id="PS50076">
    <property type="entry name" value="DNAJ_2"/>
    <property type="match status" value="1"/>
</dbReference>
<dbReference type="PROSITE" id="PS51188">
    <property type="entry name" value="ZF_CR"/>
    <property type="match status" value="1"/>
</dbReference>
<feature type="chain" id="PRO_1000085280" description="Chaperone protein DnaJ">
    <location>
        <begin position="1"/>
        <end position="364"/>
    </location>
</feature>
<feature type="domain" description="J" evidence="1">
    <location>
        <begin position="5"/>
        <end position="71"/>
    </location>
</feature>
<feature type="repeat" description="CXXCXGXG motif">
    <location>
        <begin position="140"/>
        <end position="147"/>
    </location>
</feature>
<feature type="repeat" description="CXXCXGXG motif">
    <location>
        <begin position="157"/>
        <end position="164"/>
    </location>
</feature>
<feature type="repeat" description="CXXCXGXG motif">
    <location>
        <begin position="179"/>
        <end position="186"/>
    </location>
</feature>
<feature type="repeat" description="CXXCXGXG motif">
    <location>
        <begin position="193"/>
        <end position="200"/>
    </location>
</feature>
<feature type="zinc finger region" description="CR-type" evidence="1">
    <location>
        <begin position="127"/>
        <end position="205"/>
    </location>
</feature>
<feature type="binding site" evidence="1">
    <location>
        <position position="140"/>
    </location>
    <ligand>
        <name>Zn(2+)</name>
        <dbReference type="ChEBI" id="CHEBI:29105"/>
        <label>1</label>
    </ligand>
</feature>
<feature type="binding site" evidence="1">
    <location>
        <position position="143"/>
    </location>
    <ligand>
        <name>Zn(2+)</name>
        <dbReference type="ChEBI" id="CHEBI:29105"/>
        <label>1</label>
    </ligand>
</feature>
<feature type="binding site" evidence="1">
    <location>
        <position position="157"/>
    </location>
    <ligand>
        <name>Zn(2+)</name>
        <dbReference type="ChEBI" id="CHEBI:29105"/>
        <label>2</label>
    </ligand>
</feature>
<feature type="binding site" evidence="1">
    <location>
        <position position="160"/>
    </location>
    <ligand>
        <name>Zn(2+)</name>
        <dbReference type="ChEBI" id="CHEBI:29105"/>
        <label>2</label>
    </ligand>
</feature>
<feature type="binding site" evidence="1">
    <location>
        <position position="179"/>
    </location>
    <ligand>
        <name>Zn(2+)</name>
        <dbReference type="ChEBI" id="CHEBI:29105"/>
        <label>2</label>
    </ligand>
</feature>
<feature type="binding site" evidence="1">
    <location>
        <position position="182"/>
    </location>
    <ligand>
        <name>Zn(2+)</name>
        <dbReference type="ChEBI" id="CHEBI:29105"/>
        <label>2</label>
    </ligand>
</feature>
<feature type="binding site" evidence="1">
    <location>
        <position position="193"/>
    </location>
    <ligand>
        <name>Zn(2+)</name>
        <dbReference type="ChEBI" id="CHEBI:29105"/>
        <label>1</label>
    </ligand>
</feature>
<feature type="binding site" evidence="1">
    <location>
        <position position="196"/>
    </location>
    <ligand>
        <name>Zn(2+)</name>
        <dbReference type="ChEBI" id="CHEBI:29105"/>
        <label>1</label>
    </ligand>
</feature>
<organism>
    <name type="scientific">Ruthia magnifica subsp. Calyptogena magnifica</name>
    <dbReference type="NCBI Taxonomy" id="413404"/>
    <lineage>
        <taxon>Bacteria</taxon>
        <taxon>Pseudomonadati</taxon>
        <taxon>Pseudomonadota</taxon>
        <taxon>Gammaproteobacteria</taxon>
        <taxon>Candidatus Pseudothioglobaceae</taxon>
        <taxon>Candidatus Ruthturnera</taxon>
    </lineage>
</organism>
<accession>A1AW21</accession>
<keyword id="KW-0143">Chaperone</keyword>
<keyword id="KW-0963">Cytoplasm</keyword>
<keyword id="KW-0235">DNA replication</keyword>
<keyword id="KW-0479">Metal-binding</keyword>
<keyword id="KW-0677">Repeat</keyword>
<keyword id="KW-0346">Stress response</keyword>
<keyword id="KW-0862">Zinc</keyword>
<keyword id="KW-0863">Zinc-finger</keyword>
<evidence type="ECO:0000255" key="1">
    <source>
        <dbReference type="HAMAP-Rule" id="MF_01152"/>
    </source>
</evidence>
<protein>
    <recommendedName>
        <fullName evidence="1">Chaperone protein DnaJ</fullName>
    </recommendedName>
</protein>
<reference key="1">
    <citation type="journal article" date="2007" name="Science">
        <title>The Calyptogena magnifica chemoautotrophic symbiont genome.</title>
        <authorList>
            <person name="Newton I.L.G."/>
            <person name="Woyke T."/>
            <person name="Auchtung T.A."/>
            <person name="Dilly G.F."/>
            <person name="Dutton R.J."/>
            <person name="Fisher M.C."/>
            <person name="Fontanez K.M."/>
            <person name="Lau E."/>
            <person name="Stewart F.J."/>
            <person name="Richardson P.M."/>
            <person name="Barry K.W."/>
            <person name="Saunders E."/>
            <person name="Detter J.C."/>
            <person name="Wu D."/>
            <person name="Eisen J.A."/>
            <person name="Cavanaugh C.M."/>
        </authorList>
    </citation>
    <scope>NUCLEOTIDE SEQUENCE [LARGE SCALE GENOMIC DNA]</scope>
</reference>
<sequence>MSQKDYYEILGVAKNADAKQIKKAYKRLAMKHHPDRVKNDKASAEKKFKEIQKAYAILSDVQKRQAYDQFGHVGGNANVGSAGGNPFGGGFGDIFGDIFGGGSQQSNNRGSDLRYDLEIDLKKAAQGSTVKIRIPKNETCDTCSGIGAKSGTNVKTCSICSGVGQVQTQQGFFTVQRPCGTCSGTGQKIEFPCGTCRGQGLVRKQKTLSVKIPAGVDTGNRIRLSGEGEAGTIGSSSGDLYVQVHVKKHAIFEREDNDLYCEVPIDFATAALGGSIEVPTLENKLKIKVPSGTQTGKLFRLRDKGISHLQRDGSGDLICQVKIETPVNLNKKQQDLLQKFSSSCGKKHHPESDSFFDKMKSFFG</sequence>